<reference key="1">
    <citation type="journal article" date="1992" name="J. Appl. Bacteriol.">
        <title>Nucleotide sequence and structural relationships of a chloramphenicol acetyltransferase encoded by the plasmid pSCS6 from Staphylococcus aureus.</title>
        <authorList>
            <person name="Cardoso M."/>
            <person name="Schwarz S."/>
        </authorList>
    </citation>
    <scope>NUCLEOTIDE SEQUENCE [GENOMIC DNA]</scope>
</reference>
<reference key="2">
    <citation type="journal article" date="1992" name="J. Gen. Microbiol.">
        <title>Characterization of the chloramphenicol acetyltransferase variants encoded by the plasmids pSCS6 and pSCS7 from Staphylococcus aureus.</title>
        <authorList>
            <person name="Cardoso M."/>
            <person name="Schwarz S."/>
        </authorList>
    </citation>
    <scope>CHARACTERIZATION</scope>
</reference>
<sequence>MTFNIIKLENWDRKEYFEHYFNQQTTYSITKEIDITLFKDMSKKKGYEIYPSLIYAIMEVVNKNKVFRTGINSENKLGYWDKLNPLYTVFNKQTEKFTNIWTESDNNFTSFYNNYKNDLLEYKDKEEMFPKKPIPENTLPISMIPWIDFSSFNLNIGNNSNFLLPIITIGKFYSENNKIYIPVALQLHHAVCDGYHASLFINEFQDIIKKVDDWI</sequence>
<dbReference type="EC" id="2.3.1.28"/>
<dbReference type="EMBL" id="X60827">
    <property type="protein sequence ID" value="CAA43218.1"/>
    <property type="molecule type" value="Genomic_DNA"/>
</dbReference>
<dbReference type="RefSeq" id="WP_032488466.1">
    <property type="nucleotide sequence ID" value="NG_047567.1"/>
</dbReference>
<dbReference type="SMR" id="P36882"/>
<dbReference type="GO" id="GO:0008811">
    <property type="term" value="F:chloramphenicol O-acetyltransferase activity"/>
    <property type="evidence" value="ECO:0007669"/>
    <property type="project" value="UniProtKB-EC"/>
</dbReference>
<dbReference type="GO" id="GO:0046677">
    <property type="term" value="P:response to antibiotic"/>
    <property type="evidence" value="ECO:0007669"/>
    <property type="project" value="UniProtKB-KW"/>
</dbReference>
<dbReference type="Gene3D" id="3.30.559.10">
    <property type="entry name" value="Chloramphenicol acetyltransferase-like domain"/>
    <property type="match status" value="1"/>
</dbReference>
<dbReference type="InterPro" id="IPR023213">
    <property type="entry name" value="CAT-like_dom_sf"/>
</dbReference>
<dbReference type="InterPro" id="IPR018372">
    <property type="entry name" value="Chloramphenicol_AcTrfase_AS"/>
</dbReference>
<dbReference type="InterPro" id="IPR001707">
    <property type="entry name" value="Cmp_AcTrfase"/>
</dbReference>
<dbReference type="NCBIfam" id="NF000491">
    <property type="entry name" value="chloram_CatA"/>
    <property type="match status" value="1"/>
</dbReference>
<dbReference type="PANTHER" id="PTHR38474:SF2">
    <property type="entry name" value="CHLORAMPHENICOL ACETYLTRANSFERASE"/>
    <property type="match status" value="1"/>
</dbReference>
<dbReference type="PANTHER" id="PTHR38474">
    <property type="entry name" value="SLR0299 PROTEIN"/>
    <property type="match status" value="1"/>
</dbReference>
<dbReference type="Pfam" id="PF00302">
    <property type="entry name" value="CAT"/>
    <property type="match status" value="1"/>
</dbReference>
<dbReference type="PIRSF" id="PIRSF000440">
    <property type="entry name" value="CAT"/>
    <property type="match status" value="1"/>
</dbReference>
<dbReference type="SMART" id="SM01059">
    <property type="entry name" value="CAT"/>
    <property type="match status" value="1"/>
</dbReference>
<dbReference type="SUPFAM" id="SSF52777">
    <property type="entry name" value="CoA-dependent acyltransferases"/>
    <property type="match status" value="1"/>
</dbReference>
<dbReference type="PROSITE" id="PS00100">
    <property type="entry name" value="CAT"/>
    <property type="match status" value="1"/>
</dbReference>
<protein>
    <recommendedName>
        <fullName>Chloramphenicol acetyltransferase</fullName>
        <shortName>CAT</shortName>
        <ecNumber>2.3.1.28</ecNumber>
    </recommendedName>
</protein>
<name>CAT4_STAAU</name>
<organism>
    <name type="scientific">Staphylococcus aureus</name>
    <dbReference type="NCBI Taxonomy" id="1280"/>
    <lineage>
        <taxon>Bacteria</taxon>
        <taxon>Bacillati</taxon>
        <taxon>Bacillota</taxon>
        <taxon>Bacilli</taxon>
        <taxon>Bacillales</taxon>
        <taxon>Staphylococcaceae</taxon>
        <taxon>Staphylococcus</taxon>
    </lineage>
</organism>
<feature type="chain" id="PRO_0000165873" description="Chloramphenicol acetyltransferase">
    <location>
        <begin position="1"/>
        <end position="215"/>
    </location>
</feature>
<feature type="active site" description="Proton acceptor" evidence="1">
    <location>
        <position position="189"/>
    </location>
</feature>
<gene>
    <name type="primary">cat</name>
</gene>
<proteinExistence type="evidence at protein level"/>
<comment type="function">
    <text>This enzyme is an effector of chloramphenicol resistance in bacteria.</text>
</comment>
<comment type="catalytic activity">
    <reaction evidence="1">
        <text>chloramphenicol + acetyl-CoA = chloramphenicol 3-acetate + CoA</text>
        <dbReference type="Rhea" id="RHEA:18421"/>
        <dbReference type="ChEBI" id="CHEBI:16730"/>
        <dbReference type="ChEBI" id="CHEBI:17698"/>
        <dbReference type="ChEBI" id="CHEBI:57287"/>
        <dbReference type="ChEBI" id="CHEBI:57288"/>
        <dbReference type="EC" id="2.3.1.28"/>
    </reaction>
</comment>
<comment type="subunit">
    <text>Homotrimer.</text>
</comment>
<comment type="similarity">
    <text evidence="2">Belongs to the chloramphenicol acetyltransferase family.</text>
</comment>
<evidence type="ECO:0000255" key="1">
    <source>
        <dbReference type="PROSITE-ProRule" id="PRU10021"/>
    </source>
</evidence>
<evidence type="ECO:0000305" key="2"/>
<keyword id="KW-0012">Acyltransferase</keyword>
<keyword id="KW-0046">Antibiotic resistance</keyword>
<keyword id="KW-0614">Plasmid</keyword>
<keyword id="KW-0808">Transferase</keyword>
<accession>P36882</accession>
<geneLocation type="plasmid">
    <name>pSCS6</name>
</geneLocation>